<reference key="1">
    <citation type="journal article" date="2010" name="J. Bacteriol.">
        <title>Complete genome sequence of Methanothermobacter marburgensis, a methanoarchaeon model organism.</title>
        <authorList>
            <person name="Liesegang H."/>
            <person name="Kaster A.K."/>
            <person name="Wiezer A."/>
            <person name="Goenrich M."/>
            <person name="Wollherr A."/>
            <person name="Seedorf H."/>
            <person name="Gottschalk G."/>
            <person name="Thauer R.K."/>
        </authorList>
    </citation>
    <scope>NUCLEOTIDE SEQUENCE [LARGE SCALE GENOMIC DNA]</scope>
    <source>
        <strain>ATCC BAA-927 / DSM 2133 / JCM 14651 / NBRC 100331 / OCM 82 / Marburg</strain>
    </source>
</reference>
<dbReference type="EC" id="7.2.1.4" evidence="1"/>
<dbReference type="EMBL" id="CP001710">
    <property type="protein sequence ID" value="ADL59029.1"/>
    <property type="molecule type" value="Genomic_DNA"/>
</dbReference>
<dbReference type="RefSeq" id="WP_013296240.1">
    <property type="nucleotide sequence ID" value="NC_014408.1"/>
</dbReference>
<dbReference type="SMR" id="D9PXT1"/>
<dbReference type="STRING" id="79929.MTBMA_c14500"/>
<dbReference type="PaxDb" id="79929-MTBMA_c14500"/>
<dbReference type="GeneID" id="43707825"/>
<dbReference type="GeneID" id="9705159"/>
<dbReference type="KEGG" id="mmg:MTBMA_c14500"/>
<dbReference type="HOGENOM" id="CLU_100863_0_0_2"/>
<dbReference type="OrthoDB" id="130682at2157"/>
<dbReference type="UniPathway" id="UPA00640">
    <property type="reaction ID" value="UER00698"/>
</dbReference>
<dbReference type="Proteomes" id="UP000000345">
    <property type="component" value="Chromosome"/>
</dbReference>
<dbReference type="GO" id="GO:0005886">
    <property type="term" value="C:plasma membrane"/>
    <property type="evidence" value="ECO:0007669"/>
    <property type="project" value="UniProtKB-SubCell"/>
</dbReference>
<dbReference type="GO" id="GO:0050897">
    <property type="term" value="F:cobalt ion binding"/>
    <property type="evidence" value="ECO:0007669"/>
    <property type="project" value="InterPro"/>
</dbReference>
<dbReference type="GO" id="GO:0030269">
    <property type="term" value="F:tetrahydromethanopterin S-methyltransferase activity"/>
    <property type="evidence" value="ECO:0007669"/>
    <property type="project" value="UniProtKB-UniRule"/>
</dbReference>
<dbReference type="GO" id="GO:0019386">
    <property type="term" value="P:methanogenesis, from carbon dioxide"/>
    <property type="evidence" value="ECO:0007669"/>
    <property type="project" value="UniProtKB-UniRule"/>
</dbReference>
<dbReference type="GO" id="GO:0032259">
    <property type="term" value="P:methylation"/>
    <property type="evidence" value="ECO:0007669"/>
    <property type="project" value="UniProtKB-KW"/>
</dbReference>
<dbReference type="GO" id="GO:0006730">
    <property type="term" value="P:one-carbon metabolic process"/>
    <property type="evidence" value="ECO:0007669"/>
    <property type="project" value="UniProtKB-UniRule"/>
</dbReference>
<dbReference type="HAMAP" id="MF_01093">
    <property type="entry name" value="MtrA"/>
    <property type="match status" value="1"/>
</dbReference>
<dbReference type="InterPro" id="IPR030688">
    <property type="entry name" value="MeTrfase_MtrA/MtxA"/>
</dbReference>
<dbReference type="InterPro" id="IPR005778">
    <property type="entry name" value="MtrA"/>
</dbReference>
<dbReference type="NCBIfam" id="TIGR01111">
    <property type="entry name" value="mtrA"/>
    <property type="match status" value="1"/>
</dbReference>
<dbReference type="NCBIfam" id="NF002126">
    <property type="entry name" value="PRK00964.1-4"/>
    <property type="match status" value="1"/>
</dbReference>
<dbReference type="Pfam" id="PF04208">
    <property type="entry name" value="MtrA"/>
    <property type="match status" value="1"/>
</dbReference>
<dbReference type="PIRSF" id="PIRSF500207">
    <property type="entry name" value="MtrA"/>
    <property type="match status" value="1"/>
</dbReference>
<dbReference type="PIRSF" id="PIRSF009452">
    <property type="entry name" value="MtrA_MtxA"/>
    <property type="match status" value="1"/>
</dbReference>
<comment type="function">
    <text evidence="1">Part of a complex that catalyzes the formation of methyl-coenzyme M and tetrahydromethanopterin from coenzyme M and methyl-tetrahydromethanopterin. This is an energy-conserving, sodium-ion translocating step.</text>
</comment>
<comment type="catalytic activity">
    <reaction evidence="1">
        <text>5-methyl-5,6,7,8-tetrahydromethanopterin + coenzyme M + 2 Na(+)(in) = 5,6,7,8-tetrahydromethanopterin + methyl-coenzyme M + 2 Na(+)(out)</text>
        <dbReference type="Rhea" id="RHEA:53492"/>
        <dbReference type="ChEBI" id="CHEBI:29101"/>
        <dbReference type="ChEBI" id="CHEBI:58103"/>
        <dbReference type="ChEBI" id="CHEBI:58116"/>
        <dbReference type="ChEBI" id="CHEBI:58286"/>
        <dbReference type="ChEBI" id="CHEBI:58319"/>
        <dbReference type="EC" id="7.2.1.4"/>
    </reaction>
</comment>
<comment type="cofactor">
    <cofactor evidence="1">
        <name>5-hydroxybenzimidazolylcob(I)amide</name>
        <dbReference type="ChEBI" id="CHEBI:60494"/>
    </cofactor>
    <text evidence="1">Binds 1 5-hydroxybenzimidazolylcobamide group.</text>
</comment>
<comment type="pathway">
    <text evidence="1">One-carbon metabolism; methanogenesis from CO(2); methyl-coenzyme M from 5,10-methylene-5,6,7,8-tetrahydromethanopterin: step 2/2.</text>
</comment>
<comment type="subunit">
    <text evidence="1">The complex is composed of 8 subunits; MtrA, MtrB, MtrC, MtrD, MtrE, MtrF, MtrG and MtrH.</text>
</comment>
<comment type="subcellular location">
    <subcellularLocation>
        <location evidence="1">Cell membrane</location>
        <topology evidence="1">Single-pass membrane protein</topology>
    </subcellularLocation>
</comment>
<comment type="similarity">
    <text evidence="1">Belongs to the MtrA family.</text>
</comment>
<protein>
    <recommendedName>
        <fullName evidence="1">Tetrahydromethanopterin S-methyltransferase subunit A 2</fullName>
        <ecNumber evidence="1">7.2.1.4</ecNumber>
    </recommendedName>
    <alternativeName>
        <fullName evidence="1">N5-methyltetrahydromethanopterin--coenzyme M methyltransferase subunit A 2</fullName>
    </alternativeName>
</protein>
<proteinExistence type="inferred from homology"/>
<accession>D9PXT1</accession>
<gene>
    <name evidence="1" type="primary">mtrA2</name>
    <name type="ordered locus">MTBMA_c14500</name>
</gene>
<sequence length="185" mass="20003">MVDKKVDKKPVPEDWPHIVGDYVVGDAESPVAVVTLGSHMEDEPVRAGAAISGPLHTENLGIEKVVGNVIANPNLRFLLVCGAEVMGHITGQTMKALHSNGVDGETGRIIGATGAIPYIENMPDEAIERFRRQVELVDMVDVEDPAAIRERIGECVVHDSGAIDEEPLILRPSEDLNKNKPDENT</sequence>
<feature type="chain" id="PRO_0000403069" description="Tetrahydromethanopterin S-methyltransferase subunit A 2">
    <location>
        <begin position="1"/>
        <end position="185"/>
    </location>
</feature>
<feature type="topological domain" description="Cytoplasmic" evidence="1">
    <location>
        <begin position="1"/>
        <end position="21"/>
    </location>
</feature>
<feature type="transmembrane region" description="Helical" evidence="1">
    <location>
        <begin position="22"/>
        <end position="38"/>
    </location>
</feature>
<feature type="topological domain" description="Extracellular" evidence="1">
    <location>
        <begin position="39"/>
        <end position="185"/>
    </location>
</feature>
<feature type="binding site" evidence="1">
    <location>
        <position position="88"/>
    </location>
    <ligand>
        <name>5-hydroxybenzimidazolylcob(I)amide</name>
        <dbReference type="ChEBI" id="CHEBI:60494"/>
        <note>cofactor</note>
    </ligand>
</feature>
<evidence type="ECO:0000255" key="1">
    <source>
        <dbReference type="HAMAP-Rule" id="MF_01093"/>
    </source>
</evidence>
<keyword id="KW-1003">Cell membrane</keyword>
<keyword id="KW-0170">Cobalt</keyword>
<keyword id="KW-0472">Membrane</keyword>
<keyword id="KW-0484">Methanogenesis</keyword>
<keyword id="KW-0489">Methyltransferase</keyword>
<keyword id="KW-0554">One-carbon metabolism</keyword>
<keyword id="KW-0808">Transferase</keyword>
<keyword id="KW-1278">Translocase</keyword>
<keyword id="KW-0812">Transmembrane</keyword>
<keyword id="KW-1133">Transmembrane helix</keyword>
<name>MTRA2_METTM</name>
<organism>
    <name type="scientific">Methanothermobacter marburgensis (strain ATCC BAA-927 / DSM 2133 / JCM 14651 / NBRC 100331 / OCM 82 / Marburg)</name>
    <name type="common">Methanobacterium thermoautotrophicum</name>
    <dbReference type="NCBI Taxonomy" id="79929"/>
    <lineage>
        <taxon>Archaea</taxon>
        <taxon>Methanobacteriati</taxon>
        <taxon>Methanobacteriota</taxon>
        <taxon>Methanomada group</taxon>
        <taxon>Methanobacteria</taxon>
        <taxon>Methanobacteriales</taxon>
        <taxon>Methanobacteriaceae</taxon>
        <taxon>Methanothermobacter</taxon>
    </lineage>
</organism>